<gene>
    <name evidence="1" type="primary">metN</name>
    <name type="ordered locus">DSY3918</name>
</gene>
<evidence type="ECO:0000255" key="1">
    <source>
        <dbReference type="HAMAP-Rule" id="MF_01719"/>
    </source>
</evidence>
<name>METN_DESHY</name>
<proteinExistence type="inferred from homology"/>
<organism>
    <name type="scientific">Desulfitobacterium hafniense (strain Y51)</name>
    <dbReference type="NCBI Taxonomy" id="138119"/>
    <lineage>
        <taxon>Bacteria</taxon>
        <taxon>Bacillati</taxon>
        <taxon>Bacillota</taxon>
        <taxon>Clostridia</taxon>
        <taxon>Eubacteriales</taxon>
        <taxon>Desulfitobacteriaceae</taxon>
        <taxon>Desulfitobacterium</taxon>
    </lineage>
</organism>
<protein>
    <recommendedName>
        <fullName evidence="1">Methionine import ATP-binding protein MetN</fullName>
        <ecNumber evidence="1">7.4.2.11</ecNumber>
    </recommendedName>
</protein>
<dbReference type="EC" id="7.4.2.11" evidence="1"/>
<dbReference type="EMBL" id="AP008230">
    <property type="protein sequence ID" value="BAE85707.1"/>
    <property type="molecule type" value="Genomic_DNA"/>
</dbReference>
<dbReference type="RefSeq" id="WP_005817222.1">
    <property type="nucleotide sequence ID" value="NC_007907.1"/>
</dbReference>
<dbReference type="SMR" id="Q24QI5"/>
<dbReference type="STRING" id="138119.DSY3918"/>
<dbReference type="KEGG" id="dsy:DSY3918"/>
<dbReference type="eggNOG" id="COG1135">
    <property type="taxonomic scope" value="Bacteria"/>
</dbReference>
<dbReference type="HOGENOM" id="CLU_000604_1_3_9"/>
<dbReference type="Proteomes" id="UP000001946">
    <property type="component" value="Chromosome"/>
</dbReference>
<dbReference type="GO" id="GO:0005886">
    <property type="term" value="C:plasma membrane"/>
    <property type="evidence" value="ECO:0007669"/>
    <property type="project" value="UniProtKB-SubCell"/>
</dbReference>
<dbReference type="GO" id="GO:0033232">
    <property type="term" value="F:ABC-type D-methionine transporter activity"/>
    <property type="evidence" value="ECO:0007669"/>
    <property type="project" value="UniProtKB-EC"/>
</dbReference>
<dbReference type="GO" id="GO:0005524">
    <property type="term" value="F:ATP binding"/>
    <property type="evidence" value="ECO:0007669"/>
    <property type="project" value="UniProtKB-KW"/>
</dbReference>
<dbReference type="GO" id="GO:0016887">
    <property type="term" value="F:ATP hydrolysis activity"/>
    <property type="evidence" value="ECO:0007669"/>
    <property type="project" value="InterPro"/>
</dbReference>
<dbReference type="CDD" id="cd03258">
    <property type="entry name" value="ABC_MetN_methionine_transporter"/>
    <property type="match status" value="1"/>
</dbReference>
<dbReference type="FunFam" id="3.40.50.300:FF:000056">
    <property type="entry name" value="Cell division ATP-binding protein FtsE"/>
    <property type="match status" value="1"/>
</dbReference>
<dbReference type="Gene3D" id="3.30.70.260">
    <property type="match status" value="1"/>
</dbReference>
<dbReference type="Gene3D" id="3.40.50.300">
    <property type="entry name" value="P-loop containing nucleotide triphosphate hydrolases"/>
    <property type="match status" value="1"/>
</dbReference>
<dbReference type="InterPro" id="IPR003593">
    <property type="entry name" value="AAA+_ATPase"/>
</dbReference>
<dbReference type="InterPro" id="IPR003439">
    <property type="entry name" value="ABC_transporter-like_ATP-bd"/>
</dbReference>
<dbReference type="InterPro" id="IPR017871">
    <property type="entry name" value="ABC_transporter-like_CS"/>
</dbReference>
<dbReference type="InterPro" id="IPR045865">
    <property type="entry name" value="ACT-like_dom_sf"/>
</dbReference>
<dbReference type="InterPro" id="IPR041701">
    <property type="entry name" value="MetN_ABC"/>
</dbReference>
<dbReference type="InterPro" id="IPR050086">
    <property type="entry name" value="MetN_ABC_transporter-like"/>
</dbReference>
<dbReference type="InterPro" id="IPR018449">
    <property type="entry name" value="NIL_domain"/>
</dbReference>
<dbReference type="InterPro" id="IPR027417">
    <property type="entry name" value="P-loop_NTPase"/>
</dbReference>
<dbReference type="PANTHER" id="PTHR43166">
    <property type="entry name" value="AMINO ACID IMPORT ATP-BINDING PROTEIN"/>
    <property type="match status" value="1"/>
</dbReference>
<dbReference type="PANTHER" id="PTHR43166:SF30">
    <property type="entry name" value="METHIONINE IMPORT ATP-BINDING PROTEIN METN"/>
    <property type="match status" value="1"/>
</dbReference>
<dbReference type="Pfam" id="PF00005">
    <property type="entry name" value="ABC_tran"/>
    <property type="match status" value="1"/>
</dbReference>
<dbReference type="Pfam" id="PF09383">
    <property type="entry name" value="NIL"/>
    <property type="match status" value="1"/>
</dbReference>
<dbReference type="SMART" id="SM00382">
    <property type="entry name" value="AAA"/>
    <property type="match status" value="1"/>
</dbReference>
<dbReference type="SMART" id="SM00930">
    <property type="entry name" value="NIL"/>
    <property type="match status" value="1"/>
</dbReference>
<dbReference type="SUPFAM" id="SSF55021">
    <property type="entry name" value="ACT-like"/>
    <property type="match status" value="1"/>
</dbReference>
<dbReference type="SUPFAM" id="SSF52540">
    <property type="entry name" value="P-loop containing nucleoside triphosphate hydrolases"/>
    <property type="match status" value="1"/>
</dbReference>
<dbReference type="PROSITE" id="PS00211">
    <property type="entry name" value="ABC_TRANSPORTER_1"/>
    <property type="match status" value="1"/>
</dbReference>
<dbReference type="PROSITE" id="PS50893">
    <property type="entry name" value="ABC_TRANSPORTER_2"/>
    <property type="match status" value="1"/>
</dbReference>
<dbReference type="PROSITE" id="PS51264">
    <property type="entry name" value="METN"/>
    <property type="match status" value="1"/>
</dbReference>
<keyword id="KW-0029">Amino-acid transport</keyword>
<keyword id="KW-0067">ATP-binding</keyword>
<keyword id="KW-1003">Cell membrane</keyword>
<keyword id="KW-0472">Membrane</keyword>
<keyword id="KW-0547">Nucleotide-binding</keyword>
<keyword id="KW-1185">Reference proteome</keyword>
<keyword id="KW-1278">Translocase</keyword>
<keyword id="KW-0813">Transport</keyword>
<sequence>MIRIENLTKIYTSRKEQVVAIEDISLDIPKGAIYGIIGLSGAGKSTLVRCINRLEEPTGGKIIIDGQDLTAMSAVELRQARQKIGMIFQHFHLLQSRTVFDNIAFPLEIAGFKKPEIEARVKELLPLVGLEDKAHVYPSQLSGGQKQRVGIARALATNPKVLLCDEATSALDPQTTLSILNLLKDINQRFGLTIIMITHEMKVVKEICTDVAVIHESKIAEQGPVESVFIQPQSSVAKEFISTVFPNELPEDLLRELATHPNSQIVRIQFLGSRASDPIIADLMKECEVRANILYGSIDHLRSTLFGTLTLELQGDPGQLALAHQYLAQRELKVEVIQNV</sequence>
<accession>Q24QI5</accession>
<feature type="chain" id="PRO_0000270291" description="Methionine import ATP-binding protein MetN">
    <location>
        <begin position="1"/>
        <end position="340"/>
    </location>
</feature>
<feature type="domain" description="ABC transporter" evidence="1">
    <location>
        <begin position="2"/>
        <end position="241"/>
    </location>
</feature>
<feature type="binding site" evidence="1">
    <location>
        <begin position="38"/>
        <end position="45"/>
    </location>
    <ligand>
        <name>ATP</name>
        <dbReference type="ChEBI" id="CHEBI:30616"/>
    </ligand>
</feature>
<reference key="1">
    <citation type="journal article" date="2006" name="J. Bacteriol.">
        <title>Complete genome sequence of the dehalorespiring bacterium Desulfitobacterium hafniense Y51 and comparison with Dehalococcoides ethenogenes 195.</title>
        <authorList>
            <person name="Nonaka H."/>
            <person name="Keresztes G."/>
            <person name="Shinoda Y."/>
            <person name="Ikenaga Y."/>
            <person name="Abe M."/>
            <person name="Naito K."/>
            <person name="Inatomi K."/>
            <person name="Furukawa K."/>
            <person name="Inui M."/>
            <person name="Yukawa H."/>
        </authorList>
    </citation>
    <scope>NUCLEOTIDE SEQUENCE [LARGE SCALE GENOMIC DNA]</scope>
    <source>
        <strain>Y51</strain>
    </source>
</reference>
<comment type="function">
    <text evidence="1">Part of the ABC transporter complex MetNIQ involved in methionine import. Responsible for energy coupling to the transport system.</text>
</comment>
<comment type="catalytic activity">
    <reaction evidence="1">
        <text>L-methionine(out) + ATP + H2O = L-methionine(in) + ADP + phosphate + H(+)</text>
        <dbReference type="Rhea" id="RHEA:29779"/>
        <dbReference type="ChEBI" id="CHEBI:15377"/>
        <dbReference type="ChEBI" id="CHEBI:15378"/>
        <dbReference type="ChEBI" id="CHEBI:30616"/>
        <dbReference type="ChEBI" id="CHEBI:43474"/>
        <dbReference type="ChEBI" id="CHEBI:57844"/>
        <dbReference type="ChEBI" id="CHEBI:456216"/>
        <dbReference type="EC" id="7.4.2.11"/>
    </reaction>
</comment>
<comment type="catalytic activity">
    <reaction evidence="1">
        <text>D-methionine(out) + ATP + H2O = D-methionine(in) + ADP + phosphate + H(+)</text>
        <dbReference type="Rhea" id="RHEA:29767"/>
        <dbReference type="ChEBI" id="CHEBI:15377"/>
        <dbReference type="ChEBI" id="CHEBI:15378"/>
        <dbReference type="ChEBI" id="CHEBI:30616"/>
        <dbReference type="ChEBI" id="CHEBI:43474"/>
        <dbReference type="ChEBI" id="CHEBI:57932"/>
        <dbReference type="ChEBI" id="CHEBI:456216"/>
        <dbReference type="EC" id="7.4.2.11"/>
    </reaction>
</comment>
<comment type="subunit">
    <text evidence="1">The complex is composed of two ATP-binding proteins (MetN), two transmembrane proteins (MetI) and a solute-binding protein (MetQ).</text>
</comment>
<comment type="subcellular location">
    <subcellularLocation>
        <location evidence="1">Cell membrane</location>
        <topology evidence="1">Peripheral membrane protein</topology>
    </subcellularLocation>
</comment>
<comment type="similarity">
    <text evidence="1">Belongs to the ABC transporter superfamily. Methionine importer (TC 3.A.1.24) family.</text>
</comment>